<reference key="1">
    <citation type="journal article" date="2004" name="Proc. Natl. Acad. Sci. U.S.A.">
        <title>Comparison of the genome of the oral pathogen Treponema denticola with other spirochete genomes.</title>
        <authorList>
            <person name="Seshadri R."/>
            <person name="Myers G.S.A."/>
            <person name="Tettelin H."/>
            <person name="Eisen J.A."/>
            <person name="Heidelberg J.F."/>
            <person name="Dodson R.J."/>
            <person name="Davidsen T.M."/>
            <person name="DeBoy R.T."/>
            <person name="Fouts D.E."/>
            <person name="Haft D.H."/>
            <person name="Selengut J."/>
            <person name="Ren Q."/>
            <person name="Brinkac L.M."/>
            <person name="Madupu R."/>
            <person name="Kolonay J.F."/>
            <person name="Durkin S.A."/>
            <person name="Daugherty S.C."/>
            <person name="Shetty J."/>
            <person name="Shvartsbeyn A."/>
            <person name="Gebregeorgis E."/>
            <person name="Geer K."/>
            <person name="Tsegaye G."/>
            <person name="Malek J.A."/>
            <person name="Ayodeji B."/>
            <person name="Shatsman S."/>
            <person name="McLeod M.P."/>
            <person name="Smajs D."/>
            <person name="Howell J.K."/>
            <person name="Pal S."/>
            <person name="Amin A."/>
            <person name="Vashisth P."/>
            <person name="McNeill T.Z."/>
            <person name="Xiang Q."/>
            <person name="Sodergren E."/>
            <person name="Baca E."/>
            <person name="Weinstock G.M."/>
            <person name="Norris S.J."/>
            <person name="Fraser C.M."/>
            <person name="Paulsen I.T."/>
        </authorList>
    </citation>
    <scope>NUCLEOTIDE SEQUENCE [LARGE SCALE GENOMIC DNA]</scope>
    <source>
        <strain>ATCC 35405 / DSM 14222 / CIP 103919 / JCM 8153 / KCTC 15104</strain>
    </source>
</reference>
<accession>Q73K21</accession>
<gene>
    <name evidence="1" type="primary">rnhA</name>
    <name type="ordered locus">TDE_2570</name>
</gene>
<keyword id="KW-0963">Cytoplasm</keyword>
<keyword id="KW-0255">Endonuclease</keyword>
<keyword id="KW-0378">Hydrolase</keyword>
<keyword id="KW-0460">Magnesium</keyword>
<keyword id="KW-0479">Metal-binding</keyword>
<keyword id="KW-0540">Nuclease</keyword>
<keyword id="KW-1185">Reference proteome</keyword>
<protein>
    <recommendedName>
        <fullName evidence="1">Ribonuclease H</fullName>
        <shortName evidence="1">RNase H</shortName>
        <ecNumber evidence="1">3.1.26.4</ecNumber>
    </recommendedName>
</protein>
<organism>
    <name type="scientific">Treponema denticola (strain ATCC 35405 / DSM 14222 / CIP 103919 / JCM 8153 / KCTC 15104)</name>
    <dbReference type="NCBI Taxonomy" id="243275"/>
    <lineage>
        <taxon>Bacteria</taxon>
        <taxon>Pseudomonadati</taxon>
        <taxon>Spirochaetota</taxon>
        <taxon>Spirochaetia</taxon>
        <taxon>Spirochaetales</taxon>
        <taxon>Treponemataceae</taxon>
        <taxon>Treponema</taxon>
    </lineage>
</organism>
<dbReference type="EC" id="3.1.26.4" evidence="1"/>
<dbReference type="EMBL" id="AE017226">
    <property type="protein sequence ID" value="AAS13087.1"/>
    <property type="molecule type" value="Genomic_DNA"/>
</dbReference>
<dbReference type="RefSeq" id="NP_973168.1">
    <property type="nucleotide sequence ID" value="NC_002967.9"/>
</dbReference>
<dbReference type="RefSeq" id="WP_002680554.1">
    <property type="nucleotide sequence ID" value="NC_002967.9"/>
</dbReference>
<dbReference type="SMR" id="Q73K21"/>
<dbReference type="STRING" id="243275.TDE_2570"/>
<dbReference type="PaxDb" id="243275-TDE_2570"/>
<dbReference type="GeneID" id="2739935"/>
<dbReference type="KEGG" id="tde:TDE_2570"/>
<dbReference type="PATRIC" id="fig|243275.7.peg.2429"/>
<dbReference type="eggNOG" id="COG0328">
    <property type="taxonomic scope" value="Bacteria"/>
</dbReference>
<dbReference type="HOGENOM" id="CLU_030894_6_0_12"/>
<dbReference type="OrthoDB" id="7845843at2"/>
<dbReference type="Proteomes" id="UP000008212">
    <property type="component" value="Chromosome"/>
</dbReference>
<dbReference type="GO" id="GO:0005737">
    <property type="term" value="C:cytoplasm"/>
    <property type="evidence" value="ECO:0007669"/>
    <property type="project" value="UniProtKB-SubCell"/>
</dbReference>
<dbReference type="GO" id="GO:0000287">
    <property type="term" value="F:magnesium ion binding"/>
    <property type="evidence" value="ECO:0007669"/>
    <property type="project" value="UniProtKB-UniRule"/>
</dbReference>
<dbReference type="GO" id="GO:0003676">
    <property type="term" value="F:nucleic acid binding"/>
    <property type="evidence" value="ECO:0007669"/>
    <property type="project" value="InterPro"/>
</dbReference>
<dbReference type="GO" id="GO:0004523">
    <property type="term" value="F:RNA-DNA hybrid ribonuclease activity"/>
    <property type="evidence" value="ECO:0007669"/>
    <property type="project" value="UniProtKB-UniRule"/>
</dbReference>
<dbReference type="GO" id="GO:0043137">
    <property type="term" value="P:DNA replication, removal of RNA primer"/>
    <property type="evidence" value="ECO:0007669"/>
    <property type="project" value="TreeGrafter"/>
</dbReference>
<dbReference type="CDD" id="cd09278">
    <property type="entry name" value="RNase_HI_prokaryote_like"/>
    <property type="match status" value="1"/>
</dbReference>
<dbReference type="Gene3D" id="3.30.420.10">
    <property type="entry name" value="Ribonuclease H-like superfamily/Ribonuclease H"/>
    <property type="match status" value="1"/>
</dbReference>
<dbReference type="HAMAP" id="MF_00042">
    <property type="entry name" value="RNase_H"/>
    <property type="match status" value="1"/>
</dbReference>
<dbReference type="InterPro" id="IPR050092">
    <property type="entry name" value="RNase_H"/>
</dbReference>
<dbReference type="InterPro" id="IPR012337">
    <property type="entry name" value="RNaseH-like_sf"/>
</dbReference>
<dbReference type="InterPro" id="IPR002156">
    <property type="entry name" value="RNaseH_domain"/>
</dbReference>
<dbReference type="InterPro" id="IPR036397">
    <property type="entry name" value="RNaseH_sf"/>
</dbReference>
<dbReference type="InterPro" id="IPR022892">
    <property type="entry name" value="RNaseHI"/>
</dbReference>
<dbReference type="NCBIfam" id="NF001236">
    <property type="entry name" value="PRK00203.1"/>
    <property type="match status" value="1"/>
</dbReference>
<dbReference type="PANTHER" id="PTHR10642">
    <property type="entry name" value="RIBONUCLEASE H1"/>
    <property type="match status" value="1"/>
</dbReference>
<dbReference type="PANTHER" id="PTHR10642:SF26">
    <property type="entry name" value="RIBONUCLEASE H1"/>
    <property type="match status" value="1"/>
</dbReference>
<dbReference type="Pfam" id="PF00075">
    <property type="entry name" value="RNase_H"/>
    <property type="match status" value="1"/>
</dbReference>
<dbReference type="SUPFAM" id="SSF53098">
    <property type="entry name" value="Ribonuclease H-like"/>
    <property type="match status" value="1"/>
</dbReference>
<dbReference type="PROSITE" id="PS50879">
    <property type="entry name" value="RNASE_H_1"/>
    <property type="match status" value="1"/>
</dbReference>
<name>RNH_TREDE</name>
<proteinExistence type="inferred from homology"/>
<evidence type="ECO:0000255" key="1">
    <source>
        <dbReference type="HAMAP-Rule" id="MF_00042"/>
    </source>
</evidence>
<evidence type="ECO:0000255" key="2">
    <source>
        <dbReference type="PROSITE-ProRule" id="PRU00408"/>
    </source>
</evidence>
<sequence length="160" mass="17924">MNIEIYTDGACSKNPGPGGWAYIMVNKDSKEEICRENGGEKSTTNNRMELMAVIRALKKIKEGAASLADKSGKALDYKSISVHTDSQYVQQGISSWIFNWKKNNWKTASKQPVKNQDLWQELDSLSASIKPEWIWVKGHAGNPLNEACDRLAVEACQKMM</sequence>
<comment type="function">
    <text evidence="1">Endonuclease that specifically degrades the RNA of RNA-DNA hybrids.</text>
</comment>
<comment type="catalytic activity">
    <reaction evidence="1">
        <text>Endonucleolytic cleavage to 5'-phosphomonoester.</text>
        <dbReference type="EC" id="3.1.26.4"/>
    </reaction>
</comment>
<comment type="cofactor">
    <cofactor evidence="1">
        <name>Mg(2+)</name>
        <dbReference type="ChEBI" id="CHEBI:18420"/>
    </cofactor>
    <text evidence="1">Binds 1 Mg(2+) ion per subunit. May bind a second metal ion at a regulatory site, or after substrate binding.</text>
</comment>
<comment type="subunit">
    <text evidence="1">Monomer.</text>
</comment>
<comment type="subcellular location">
    <subcellularLocation>
        <location evidence="1">Cytoplasm</location>
    </subcellularLocation>
</comment>
<comment type="similarity">
    <text evidence="1">Belongs to the RNase H family.</text>
</comment>
<feature type="chain" id="PRO_0000332686" description="Ribonuclease H">
    <location>
        <begin position="1"/>
        <end position="160"/>
    </location>
</feature>
<feature type="domain" description="RNase H type-1" evidence="2">
    <location>
        <begin position="1"/>
        <end position="157"/>
    </location>
</feature>
<feature type="binding site" evidence="1">
    <location>
        <position position="8"/>
    </location>
    <ligand>
        <name>Mg(2+)</name>
        <dbReference type="ChEBI" id="CHEBI:18420"/>
        <label>1</label>
    </ligand>
</feature>
<feature type="binding site" evidence="1">
    <location>
        <position position="8"/>
    </location>
    <ligand>
        <name>Mg(2+)</name>
        <dbReference type="ChEBI" id="CHEBI:18420"/>
        <label>2</label>
    </ligand>
</feature>
<feature type="binding site" evidence="1">
    <location>
        <position position="49"/>
    </location>
    <ligand>
        <name>Mg(2+)</name>
        <dbReference type="ChEBI" id="CHEBI:18420"/>
        <label>1</label>
    </ligand>
</feature>
<feature type="binding site" evidence="1">
    <location>
        <position position="85"/>
    </location>
    <ligand>
        <name>Mg(2+)</name>
        <dbReference type="ChEBI" id="CHEBI:18420"/>
        <label>1</label>
    </ligand>
</feature>
<feature type="binding site" evidence="1">
    <location>
        <position position="149"/>
    </location>
    <ligand>
        <name>Mg(2+)</name>
        <dbReference type="ChEBI" id="CHEBI:18420"/>
        <label>2</label>
    </ligand>
</feature>